<gene>
    <name type="primary">Uvssa</name>
    <name type="synonym">Kiaa1530</name>
</gene>
<sequence>MDQKLSQLIEELTTSGESQLNAQKMKELKKICKSSEEQLSHAYRLLITQLTQGHAEIRLSAFQIVDELFTRSHQFRMLLVSDFQEFLELTLGTDSDRPLPPPREAAQRLRQAAMQAVEGWNEKFGQAYKKLALGYHFLKHTKKVDFRDINVRTVAERKREEEKQKHLDKIHRESADRAKREMEEMYDEIECCLTEVENCFKLLVPLDFVPCPEDKFFGEASSMTEGYAPCPLSPDLATPRESGLSGPQDEEQPCCSKDLVASAYHVGSVVGLKALPQTAMKDSSRDEDEPSDPDDFLRSHGLGSHKYTLDVEVPSDGLKVQENEDNLAVLHAARDSLKLIQNKFLPTVCSWVQRFTRAGTYSAHLKQAIDLKMELELALKKYEELNIEPGRGQRSRTEALEDSEDEDQDFVEVPEKEGYEPRIPDHLRAEYGLEPKAPLKTLEKGTAVCKLQERTRMRREEEASDPTSAAAQMLRLQDCLSSPSPSSTRVLPGPEEAQKQAERARAPIVPFGVDLCYWGQEQLTAGKILKSDSQHRFWKPSEVEEEVDSAHVSEMLHSRHITFSGTFEPVQHKCRALRPNGRLCERQDRLKCPFHGKIIPRDDKGQPLNPEDRAREQRQQLQRQQAHPDWQDPEFLKDVEAATGVDLGSSRSSKKGKGKKKKHPNLTDLRERTNTARARLEKKVFAKAAVQRVVAAMNQMDQKKHEKFANQFNYALK</sequence>
<feature type="chain" id="PRO_0000317283" description="UV-stimulated scaffold protein A">
    <location>
        <begin position="1"/>
        <end position="717"/>
    </location>
</feature>
<feature type="zinc finger region" description="UVSSA-type" evidence="3">
    <location>
        <begin position="571"/>
        <end position="598"/>
    </location>
</feature>
<feature type="region of interest" description="VHS-like">
    <location>
        <begin position="2"/>
        <end position="145"/>
    </location>
</feature>
<feature type="region of interest" description="Disordered" evidence="4">
    <location>
        <begin position="231"/>
        <end position="253"/>
    </location>
</feature>
<feature type="region of interest" description="Disordered" evidence="4">
    <location>
        <begin position="277"/>
        <end position="301"/>
    </location>
</feature>
<feature type="region of interest" description="Disordered" evidence="4">
    <location>
        <begin position="389"/>
        <end position="418"/>
    </location>
</feature>
<feature type="region of interest" description="Disordered" evidence="4">
    <location>
        <begin position="479"/>
        <end position="503"/>
    </location>
</feature>
<feature type="region of interest" description="Disordered" evidence="4">
    <location>
        <begin position="595"/>
        <end position="672"/>
    </location>
</feature>
<feature type="coiled-coil region" evidence="2">
    <location>
        <begin position="169"/>
        <end position="199"/>
    </location>
</feature>
<feature type="compositionally biased region" description="Acidic residues" evidence="4">
    <location>
        <begin position="285"/>
        <end position="294"/>
    </location>
</feature>
<feature type="compositionally biased region" description="Acidic residues" evidence="4">
    <location>
        <begin position="400"/>
        <end position="412"/>
    </location>
</feature>
<feature type="compositionally biased region" description="Polar residues" evidence="4">
    <location>
        <begin position="479"/>
        <end position="489"/>
    </location>
</feature>
<feature type="compositionally biased region" description="Basic and acidic residues" evidence="4">
    <location>
        <begin position="599"/>
        <end position="618"/>
    </location>
</feature>
<feature type="compositionally biased region" description="Basic residues" evidence="4">
    <location>
        <begin position="652"/>
        <end position="664"/>
    </location>
</feature>
<feature type="binding site" evidence="3">
    <location>
        <position position="574"/>
    </location>
    <ligand>
        <name>Zn(2+)</name>
        <dbReference type="ChEBI" id="CHEBI:29105"/>
    </ligand>
</feature>
<feature type="binding site" evidence="3">
    <location>
        <position position="584"/>
    </location>
    <ligand>
        <name>Zn(2+)</name>
        <dbReference type="ChEBI" id="CHEBI:29105"/>
    </ligand>
</feature>
<feature type="binding site" evidence="3">
    <location>
        <position position="592"/>
    </location>
    <ligand>
        <name>Zn(2+)</name>
        <dbReference type="ChEBI" id="CHEBI:29105"/>
    </ligand>
</feature>
<feature type="binding site" evidence="3">
    <location>
        <position position="595"/>
    </location>
    <ligand>
        <name>Zn(2+)</name>
        <dbReference type="ChEBI" id="CHEBI:29105"/>
    </ligand>
</feature>
<feature type="modified residue" description="Phosphoserine" evidence="1">
    <location>
        <position position="284"/>
    </location>
</feature>
<feature type="modified residue" description="Phosphoserine" evidence="1">
    <location>
        <position position="291"/>
    </location>
</feature>
<feature type="modified residue" description="Phosphoserine" evidence="6">
    <location>
        <position position="403"/>
    </location>
</feature>
<feature type="cross-link" description="Glycyl lysine isopeptide (Lys-Gly) (interchain with G-Cter in ubiquitin)" evidence="1">
    <location>
        <position position="416"/>
    </location>
</feature>
<feature type="sequence conflict" description="In Ref. 4; AAI44921." evidence="5" ref="4">
    <original>D</original>
    <variation>G</variation>
    <location>
        <position position="82"/>
    </location>
</feature>
<feature type="sequence conflict" description="In Ref. 5; BAC98194." evidence="5" ref="5">
    <location>
        <begin position="397"/>
        <end position="442"/>
    </location>
</feature>
<evidence type="ECO:0000250" key="1">
    <source>
        <dbReference type="UniProtKB" id="Q2YD98"/>
    </source>
</evidence>
<evidence type="ECO:0000255" key="2"/>
<evidence type="ECO:0000255" key="3">
    <source>
        <dbReference type="PROSITE-ProRule" id="PRU01403"/>
    </source>
</evidence>
<evidence type="ECO:0000256" key="4">
    <source>
        <dbReference type="SAM" id="MobiDB-lite"/>
    </source>
</evidence>
<evidence type="ECO:0000305" key="5"/>
<evidence type="ECO:0007744" key="6">
    <source>
    </source>
</evidence>
<name>UVSSA_MOUSE</name>
<reference key="1">
    <citation type="journal article" date="2005" name="Science">
        <title>The transcriptional landscape of the mammalian genome.</title>
        <authorList>
            <person name="Carninci P."/>
            <person name="Kasukawa T."/>
            <person name="Katayama S."/>
            <person name="Gough J."/>
            <person name="Frith M.C."/>
            <person name="Maeda N."/>
            <person name="Oyama R."/>
            <person name="Ravasi T."/>
            <person name="Lenhard B."/>
            <person name="Wells C."/>
            <person name="Kodzius R."/>
            <person name="Shimokawa K."/>
            <person name="Bajic V.B."/>
            <person name="Brenner S.E."/>
            <person name="Batalov S."/>
            <person name="Forrest A.R."/>
            <person name="Zavolan M."/>
            <person name="Davis M.J."/>
            <person name="Wilming L.G."/>
            <person name="Aidinis V."/>
            <person name="Allen J.E."/>
            <person name="Ambesi-Impiombato A."/>
            <person name="Apweiler R."/>
            <person name="Aturaliya R.N."/>
            <person name="Bailey T.L."/>
            <person name="Bansal M."/>
            <person name="Baxter L."/>
            <person name="Beisel K.W."/>
            <person name="Bersano T."/>
            <person name="Bono H."/>
            <person name="Chalk A.M."/>
            <person name="Chiu K.P."/>
            <person name="Choudhary V."/>
            <person name="Christoffels A."/>
            <person name="Clutterbuck D.R."/>
            <person name="Crowe M.L."/>
            <person name="Dalla E."/>
            <person name="Dalrymple B.P."/>
            <person name="de Bono B."/>
            <person name="Della Gatta G."/>
            <person name="di Bernardo D."/>
            <person name="Down T."/>
            <person name="Engstrom P."/>
            <person name="Fagiolini M."/>
            <person name="Faulkner G."/>
            <person name="Fletcher C.F."/>
            <person name="Fukushima T."/>
            <person name="Furuno M."/>
            <person name="Futaki S."/>
            <person name="Gariboldi M."/>
            <person name="Georgii-Hemming P."/>
            <person name="Gingeras T.R."/>
            <person name="Gojobori T."/>
            <person name="Green R.E."/>
            <person name="Gustincich S."/>
            <person name="Harbers M."/>
            <person name="Hayashi Y."/>
            <person name="Hensch T.K."/>
            <person name="Hirokawa N."/>
            <person name="Hill D."/>
            <person name="Huminiecki L."/>
            <person name="Iacono M."/>
            <person name="Ikeo K."/>
            <person name="Iwama A."/>
            <person name="Ishikawa T."/>
            <person name="Jakt M."/>
            <person name="Kanapin A."/>
            <person name="Katoh M."/>
            <person name="Kawasawa Y."/>
            <person name="Kelso J."/>
            <person name="Kitamura H."/>
            <person name="Kitano H."/>
            <person name="Kollias G."/>
            <person name="Krishnan S.P."/>
            <person name="Kruger A."/>
            <person name="Kummerfeld S.K."/>
            <person name="Kurochkin I.V."/>
            <person name="Lareau L.F."/>
            <person name="Lazarevic D."/>
            <person name="Lipovich L."/>
            <person name="Liu J."/>
            <person name="Liuni S."/>
            <person name="McWilliam S."/>
            <person name="Madan Babu M."/>
            <person name="Madera M."/>
            <person name="Marchionni L."/>
            <person name="Matsuda H."/>
            <person name="Matsuzawa S."/>
            <person name="Miki H."/>
            <person name="Mignone F."/>
            <person name="Miyake S."/>
            <person name="Morris K."/>
            <person name="Mottagui-Tabar S."/>
            <person name="Mulder N."/>
            <person name="Nakano N."/>
            <person name="Nakauchi H."/>
            <person name="Ng P."/>
            <person name="Nilsson R."/>
            <person name="Nishiguchi S."/>
            <person name="Nishikawa S."/>
            <person name="Nori F."/>
            <person name="Ohara O."/>
            <person name="Okazaki Y."/>
            <person name="Orlando V."/>
            <person name="Pang K.C."/>
            <person name="Pavan W.J."/>
            <person name="Pavesi G."/>
            <person name="Pesole G."/>
            <person name="Petrovsky N."/>
            <person name="Piazza S."/>
            <person name="Reed J."/>
            <person name="Reid J.F."/>
            <person name="Ring B.Z."/>
            <person name="Ringwald M."/>
            <person name="Rost B."/>
            <person name="Ruan Y."/>
            <person name="Salzberg S.L."/>
            <person name="Sandelin A."/>
            <person name="Schneider C."/>
            <person name="Schoenbach C."/>
            <person name="Sekiguchi K."/>
            <person name="Semple C.A."/>
            <person name="Seno S."/>
            <person name="Sessa L."/>
            <person name="Sheng Y."/>
            <person name="Shibata Y."/>
            <person name="Shimada H."/>
            <person name="Shimada K."/>
            <person name="Silva D."/>
            <person name="Sinclair B."/>
            <person name="Sperling S."/>
            <person name="Stupka E."/>
            <person name="Sugiura K."/>
            <person name="Sultana R."/>
            <person name="Takenaka Y."/>
            <person name="Taki K."/>
            <person name="Tammoja K."/>
            <person name="Tan S.L."/>
            <person name="Tang S."/>
            <person name="Taylor M.S."/>
            <person name="Tegner J."/>
            <person name="Teichmann S.A."/>
            <person name="Ueda H.R."/>
            <person name="van Nimwegen E."/>
            <person name="Verardo R."/>
            <person name="Wei C.L."/>
            <person name="Yagi K."/>
            <person name="Yamanishi H."/>
            <person name="Zabarovsky E."/>
            <person name="Zhu S."/>
            <person name="Zimmer A."/>
            <person name="Hide W."/>
            <person name="Bult C."/>
            <person name="Grimmond S.M."/>
            <person name="Teasdale R.D."/>
            <person name="Liu E.T."/>
            <person name="Brusic V."/>
            <person name="Quackenbush J."/>
            <person name="Wahlestedt C."/>
            <person name="Mattick J.S."/>
            <person name="Hume D.A."/>
            <person name="Kai C."/>
            <person name="Sasaki D."/>
            <person name="Tomaru Y."/>
            <person name="Fukuda S."/>
            <person name="Kanamori-Katayama M."/>
            <person name="Suzuki M."/>
            <person name="Aoki J."/>
            <person name="Arakawa T."/>
            <person name="Iida J."/>
            <person name="Imamura K."/>
            <person name="Itoh M."/>
            <person name="Kato T."/>
            <person name="Kawaji H."/>
            <person name="Kawagashira N."/>
            <person name="Kawashima T."/>
            <person name="Kojima M."/>
            <person name="Kondo S."/>
            <person name="Konno H."/>
            <person name="Nakano K."/>
            <person name="Ninomiya N."/>
            <person name="Nishio T."/>
            <person name="Okada M."/>
            <person name="Plessy C."/>
            <person name="Shibata K."/>
            <person name="Shiraki T."/>
            <person name="Suzuki S."/>
            <person name="Tagami M."/>
            <person name="Waki K."/>
            <person name="Watahiki A."/>
            <person name="Okamura-Oho Y."/>
            <person name="Suzuki H."/>
            <person name="Kawai J."/>
            <person name="Hayashizaki Y."/>
        </authorList>
    </citation>
    <scope>NUCLEOTIDE SEQUENCE [LARGE SCALE MRNA]</scope>
    <source>
        <strain>C57BL/6J</strain>
        <strain>NOD</strain>
        <tissue>Spleen</tissue>
        <tissue>Testis</tissue>
    </source>
</reference>
<reference key="2">
    <citation type="journal article" date="2009" name="PLoS Biol.">
        <title>Lineage-specific biology revealed by a finished genome assembly of the mouse.</title>
        <authorList>
            <person name="Church D.M."/>
            <person name="Goodstadt L."/>
            <person name="Hillier L.W."/>
            <person name="Zody M.C."/>
            <person name="Goldstein S."/>
            <person name="She X."/>
            <person name="Bult C.J."/>
            <person name="Agarwala R."/>
            <person name="Cherry J.L."/>
            <person name="DiCuccio M."/>
            <person name="Hlavina W."/>
            <person name="Kapustin Y."/>
            <person name="Meric P."/>
            <person name="Maglott D."/>
            <person name="Birtle Z."/>
            <person name="Marques A.C."/>
            <person name="Graves T."/>
            <person name="Zhou S."/>
            <person name="Teague B."/>
            <person name="Potamousis K."/>
            <person name="Churas C."/>
            <person name="Place M."/>
            <person name="Herschleb J."/>
            <person name="Runnheim R."/>
            <person name="Forrest D."/>
            <person name="Amos-Landgraf J."/>
            <person name="Schwartz D.C."/>
            <person name="Cheng Z."/>
            <person name="Lindblad-Toh K."/>
            <person name="Eichler E.E."/>
            <person name="Ponting C.P."/>
        </authorList>
    </citation>
    <scope>NUCLEOTIDE SEQUENCE [LARGE SCALE GENOMIC DNA]</scope>
    <source>
        <strain>C57BL/6J</strain>
    </source>
</reference>
<reference key="3">
    <citation type="submission" date="2005-07" db="EMBL/GenBank/DDBJ databases">
        <authorList>
            <person name="Mural R.J."/>
            <person name="Adams M.D."/>
            <person name="Myers E.W."/>
            <person name="Smith H.O."/>
            <person name="Venter J.C."/>
        </authorList>
    </citation>
    <scope>NUCLEOTIDE SEQUENCE [LARGE SCALE GENOMIC DNA]</scope>
</reference>
<reference key="4">
    <citation type="journal article" date="2004" name="Genome Res.">
        <title>The status, quality, and expansion of the NIH full-length cDNA project: the Mammalian Gene Collection (MGC).</title>
        <authorList>
            <consortium name="The MGC Project Team"/>
        </authorList>
    </citation>
    <scope>NUCLEOTIDE SEQUENCE [LARGE SCALE MRNA]</scope>
    <source>
        <tissue>Brain</tissue>
        <tissue>Limb</tissue>
    </source>
</reference>
<reference key="5">
    <citation type="journal article" date="2003" name="DNA Res.">
        <title>Prediction of the coding sequences of mouse homologues of KIAA gene: III. The complete nucleotide sequences of 500 mouse KIAA-homologous cDNAs identified by screening of terminal sequences of cDNA clones randomly sampled from size-fractionated libraries.</title>
        <authorList>
            <person name="Okazaki N."/>
            <person name="Kikuno R."/>
            <person name="Ohara R."/>
            <person name="Inamoto S."/>
            <person name="Koseki H."/>
            <person name="Hiraoka S."/>
            <person name="Saga Y."/>
            <person name="Nagase T."/>
            <person name="Ohara O."/>
            <person name="Koga H."/>
        </authorList>
    </citation>
    <scope>NUCLEOTIDE SEQUENCE [LARGE SCALE MRNA] OF 84-717</scope>
    <source>
        <tissue>Brain</tissue>
    </source>
</reference>
<reference key="6">
    <citation type="journal article" date="2010" name="Cell">
        <title>A tissue-specific atlas of mouse protein phosphorylation and expression.</title>
        <authorList>
            <person name="Huttlin E.L."/>
            <person name="Jedrychowski M.P."/>
            <person name="Elias J.E."/>
            <person name="Goswami T."/>
            <person name="Rad R."/>
            <person name="Beausoleil S.A."/>
            <person name="Villen J."/>
            <person name="Haas W."/>
            <person name="Sowa M.E."/>
            <person name="Gygi S.P."/>
        </authorList>
    </citation>
    <scope>PHOSPHORYLATION [LARGE SCALE ANALYSIS] AT SER-403</scope>
    <scope>IDENTIFICATION BY MASS SPECTROMETRY [LARGE SCALE ANALYSIS]</scope>
    <source>
        <tissue>Kidney</tissue>
    </source>
</reference>
<comment type="function">
    <text evidence="1">Factor involved in transcription-coupled nucleotide excision repair (TC-NER), a mechanism that rapidly removes RNA polymerase II-blocking lesions from the transcribed strand of active genes. Acts as a key adapter that promotes recruitment of factors involved in TC-NER. Facilitates the ubiquitination of the elongating form of RNA polymerase II (RNA pol IIo) at DNA damage sites, thereby promoting RNA pol IIo backtracking and access by the TC-NER machinery to lesion sites. Also promotes stabilization of ERCC6/CSB by recruiting deubiquitinating enzyme USP7 to TC-NER complexes, preventing UV-induced degradation of ERCC6 by the proteasome. Mediates the recruitment of the TFIIH complex and other factors that are required for nucleotide excision repair to RNA polymerase II. Also required to inactivate stalled RNA polymerase II by blocking the access of TCEA1/TFIIS, thereby preventing reactivation of RNA polymerase II. Not involved in processing oxidative damage.</text>
</comment>
<comment type="subunit">
    <text evidence="1">Interacts with the elongating form of RNA polymerase II (RNA pol IIo) during transcription stress. Interacts with the TFIIH complex during transcription stress. Interacts with ERCC6. Interacts with ERCC8. Interacts with USP7.</text>
</comment>
<comment type="subcellular location">
    <subcellularLocation>
        <location evidence="1">Chromosome</location>
    </subcellularLocation>
    <text evidence="1">Accumulates at UV DNA damage sites.</text>
</comment>
<comment type="PTM">
    <text evidence="1">Monoubiquitinated at Lys-416 in response to transcription stress; this promotes efficient transfer of TFIIH to stalled RNA polymerase II.</text>
</comment>
<comment type="similarity">
    <text evidence="5">Belongs to the UVSSA family.</text>
</comment>
<comment type="sequence caution" evidence="5">
    <conflict type="erroneous initiation">
        <sequence resource="EMBL-CDS" id="BAB30399"/>
    </conflict>
    <text>Truncated N-terminus.</text>
</comment>
<comment type="sequence caution" evidence="5">
    <conflict type="erroneous initiation">
        <sequence resource="EMBL-CDS" id="BAC98194"/>
    </conflict>
    <text>Extended N-terminus.</text>
</comment>
<keyword id="KW-0158">Chromosome</keyword>
<keyword id="KW-0175">Coiled coil</keyword>
<keyword id="KW-0227">DNA damage</keyword>
<keyword id="KW-0234">DNA repair</keyword>
<keyword id="KW-1017">Isopeptide bond</keyword>
<keyword id="KW-0479">Metal-binding</keyword>
<keyword id="KW-0597">Phosphoprotein</keyword>
<keyword id="KW-1185">Reference proteome</keyword>
<keyword id="KW-0832">Ubl conjugation</keyword>
<keyword id="KW-0862">Zinc</keyword>
<keyword id="KW-0863">Zinc-finger</keyword>
<accession>Q9D479</accession>
<accession>B2RQ84</accession>
<accession>B7ZN03</accession>
<accession>Q3U1A8</accession>
<accession>Q6P7V8</accession>
<accession>Q6ZPN7</accession>
<dbReference type="EMBL" id="AK016722">
    <property type="protein sequence ID" value="BAB30399.1"/>
    <property type="status" value="ALT_INIT"/>
    <property type="molecule type" value="mRNA"/>
</dbReference>
<dbReference type="EMBL" id="AK156117">
    <property type="protein sequence ID" value="BAE33591.1"/>
    <property type="molecule type" value="mRNA"/>
</dbReference>
<dbReference type="EMBL" id="AC145072">
    <property type="status" value="NOT_ANNOTATED_CDS"/>
    <property type="molecule type" value="Genomic_DNA"/>
</dbReference>
<dbReference type="EMBL" id="CH466524">
    <property type="protein sequence ID" value="EDL37418.1"/>
    <property type="molecule type" value="Genomic_DNA"/>
</dbReference>
<dbReference type="EMBL" id="BC061483">
    <property type="protein sequence ID" value="AAH61483.1"/>
    <property type="molecule type" value="mRNA"/>
</dbReference>
<dbReference type="EMBL" id="BC137803">
    <property type="protein sequence ID" value="AAI37804.1"/>
    <property type="molecule type" value="mRNA"/>
</dbReference>
<dbReference type="EMBL" id="BC144920">
    <property type="protein sequence ID" value="AAI44921.1"/>
    <property type="molecule type" value="mRNA"/>
</dbReference>
<dbReference type="EMBL" id="AK129384">
    <property type="protein sequence ID" value="BAC98194.1"/>
    <property type="status" value="ALT_INIT"/>
    <property type="molecule type" value="Transcribed_RNA"/>
</dbReference>
<dbReference type="CCDS" id="CCDS39064.1"/>
<dbReference type="RefSeq" id="NP_001074570.1">
    <property type="nucleotide sequence ID" value="NM_001081101.2"/>
</dbReference>
<dbReference type="RefSeq" id="NP_081950.1">
    <property type="nucleotide sequence ID" value="NM_027674.1"/>
</dbReference>
<dbReference type="RefSeq" id="XP_006504171.1">
    <property type="nucleotide sequence ID" value="XM_006504108.5"/>
</dbReference>
<dbReference type="SMR" id="Q9D479"/>
<dbReference type="BioGRID" id="214478">
    <property type="interactions" value="1"/>
</dbReference>
<dbReference type="FunCoup" id="Q9D479">
    <property type="interactions" value="2213"/>
</dbReference>
<dbReference type="STRING" id="10090.ENSMUSP00000085170"/>
<dbReference type="iPTMnet" id="Q9D479"/>
<dbReference type="PhosphoSitePlus" id="Q9D479"/>
<dbReference type="jPOST" id="Q9D479"/>
<dbReference type="PaxDb" id="10090-ENSMUSP00000085170"/>
<dbReference type="PeptideAtlas" id="Q9D479"/>
<dbReference type="ProteomicsDB" id="300099"/>
<dbReference type="Pumba" id="Q9D479"/>
<dbReference type="Antibodypedia" id="22237">
    <property type="antibodies" value="43 antibodies from 17 providers"/>
</dbReference>
<dbReference type="Ensembl" id="ENSMUST00000087864.12">
    <property type="protein sequence ID" value="ENSMUSP00000085170.6"/>
    <property type="gene ID" value="ENSMUSG00000037355.15"/>
</dbReference>
<dbReference type="Ensembl" id="ENSMUST00000202816.2">
    <property type="protein sequence ID" value="ENSMUSP00000144400.2"/>
    <property type="gene ID" value="ENSMUSG00000037355.15"/>
</dbReference>
<dbReference type="GeneID" id="71101"/>
<dbReference type="KEGG" id="mmu:71101"/>
<dbReference type="UCSC" id="uc008xar.1">
    <property type="organism name" value="mouse"/>
</dbReference>
<dbReference type="AGR" id="MGI:1918351"/>
<dbReference type="CTD" id="57654"/>
<dbReference type="MGI" id="MGI:1918351">
    <property type="gene designation" value="Uvssa"/>
</dbReference>
<dbReference type="VEuPathDB" id="HostDB:ENSMUSG00000037355"/>
<dbReference type="eggNOG" id="KOG2374">
    <property type="taxonomic scope" value="Eukaryota"/>
</dbReference>
<dbReference type="GeneTree" id="ENSGT00390000000377"/>
<dbReference type="HOGENOM" id="CLU_023577_0_0_1"/>
<dbReference type="InParanoid" id="Q9D479"/>
<dbReference type="OMA" id="EEHAEMR"/>
<dbReference type="OrthoDB" id="5594015at2759"/>
<dbReference type="PhylomeDB" id="Q9D479"/>
<dbReference type="TreeFam" id="TF321660"/>
<dbReference type="Reactome" id="R-MMU-6781823">
    <property type="pathway name" value="Formation of TC-NER Pre-Incision Complex"/>
</dbReference>
<dbReference type="Reactome" id="R-MMU-6782135">
    <property type="pathway name" value="Dual incision in TC-NER"/>
</dbReference>
<dbReference type="Reactome" id="R-MMU-6782210">
    <property type="pathway name" value="Gap-filling DNA repair synthesis and ligation in TC-NER"/>
</dbReference>
<dbReference type="BioGRID-ORCS" id="71101">
    <property type="hits" value="1 hit in 112 CRISPR screens"/>
</dbReference>
<dbReference type="ChiTaRS" id="Uvssa">
    <property type="organism name" value="mouse"/>
</dbReference>
<dbReference type="PRO" id="PR:Q9D479"/>
<dbReference type="Proteomes" id="UP000000589">
    <property type="component" value="Chromosome 5"/>
</dbReference>
<dbReference type="RNAct" id="Q9D479">
    <property type="molecule type" value="protein"/>
</dbReference>
<dbReference type="Bgee" id="ENSMUSG00000037355">
    <property type="expression patterns" value="Expressed in manus and 219 other cell types or tissues"/>
</dbReference>
<dbReference type="ExpressionAtlas" id="Q9D479">
    <property type="expression patterns" value="baseline and differential"/>
</dbReference>
<dbReference type="GO" id="GO:0005694">
    <property type="term" value="C:chromosome"/>
    <property type="evidence" value="ECO:0000250"/>
    <property type="project" value="UniProtKB"/>
</dbReference>
<dbReference type="GO" id="GO:0005654">
    <property type="term" value="C:nucleoplasm"/>
    <property type="evidence" value="ECO:0007669"/>
    <property type="project" value="Ensembl"/>
</dbReference>
<dbReference type="GO" id="GO:0005634">
    <property type="term" value="C:nucleus"/>
    <property type="evidence" value="ECO:0000250"/>
    <property type="project" value="UniProtKB"/>
</dbReference>
<dbReference type="GO" id="GO:0090734">
    <property type="term" value="C:site of DNA damage"/>
    <property type="evidence" value="ECO:0000250"/>
    <property type="project" value="UniProtKB"/>
</dbReference>
<dbReference type="GO" id="GO:0140463">
    <property type="term" value="F:chromatin-protein adaptor activity"/>
    <property type="evidence" value="ECO:0000250"/>
    <property type="project" value="UniProtKB"/>
</dbReference>
<dbReference type="GO" id="GO:0000993">
    <property type="term" value="F:RNA polymerase II complex binding"/>
    <property type="evidence" value="ECO:0000250"/>
    <property type="project" value="UniProtKB"/>
</dbReference>
<dbReference type="GO" id="GO:0140870">
    <property type="term" value="F:RNA polymerase inhibitor activity"/>
    <property type="evidence" value="ECO:0000250"/>
    <property type="project" value="UniProtKB"/>
</dbReference>
<dbReference type="GO" id="GO:0016567">
    <property type="term" value="P:protein ubiquitination"/>
    <property type="evidence" value="ECO:0000250"/>
    <property type="project" value="UniProtKB"/>
</dbReference>
<dbReference type="GO" id="GO:0009411">
    <property type="term" value="P:response to UV"/>
    <property type="evidence" value="ECO:0000250"/>
    <property type="project" value="UniProtKB"/>
</dbReference>
<dbReference type="GO" id="GO:0006283">
    <property type="term" value="P:transcription-coupled nucleotide-excision repair"/>
    <property type="evidence" value="ECO:0000250"/>
    <property type="project" value="UniProtKB"/>
</dbReference>
<dbReference type="Gene3D" id="1.25.40.90">
    <property type="match status" value="1"/>
</dbReference>
<dbReference type="InterPro" id="IPR008942">
    <property type="entry name" value="ENTH_VHS"/>
</dbReference>
<dbReference type="InterPro" id="IPR018610">
    <property type="entry name" value="UVSSA"/>
</dbReference>
<dbReference type="InterPro" id="IPR049431">
    <property type="entry name" value="UVSSA_C"/>
</dbReference>
<dbReference type="InterPro" id="IPR049408">
    <property type="entry name" value="UVSSA_N_a-solenoid_rpt"/>
</dbReference>
<dbReference type="PANTHER" id="PTHR28670">
    <property type="entry name" value="UV-STIMULATED SCAFFOLD PROTEIN A"/>
    <property type="match status" value="1"/>
</dbReference>
<dbReference type="PANTHER" id="PTHR28670:SF1">
    <property type="entry name" value="UV-STIMULATED SCAFFOLD PROTEIN A"/>
    <property type="match status" value="1"/>
</dbReference>
<dbReference type="Pfam" id="PF09740">
    <property type="entry name" value="DUF2043"/>
    <property type="match status" value="1"/>
</dbReference>
<dbReference type="Pfam" id="PF20867">
    <property type="entry name" value="UVSSA_N"/>
    <property type="match status" value="1"/>
</dbReference>
<dbReference type="SUPFAM" id="SSF48464">
    <property type="entry name" value="ENTH/VHS domain"/>
    <property type="match status" value="1"/>
</dbReference>
<dbReference type="PROSITE" id="PS52058">
    <property type="entry name" value="ZF_UVSSA"/>
    <property type="match status" value="1"/>
</dbReference>
<proteinExistence type="evidence at protein level"/>
<protein>
    <recommendedName>
        <fullName>UV-stimulated scaffold protein A</fullName>
    </recommendedName>
</protein>
<organism>
    <name type="scientific">Mus musculus</name>
    <name type="common">Mouse</name>
    <dbReference type="NCBI Taxonomy" id="10090"/>
    <lineage>
        <taxon>Eukaryota</taxon>
        <taxon>Metazoa</taxon>
        <taxon>Chordata</taxon>
        <taxon>Craniata</taxon>
        <taxon>Vertebrata</taxon>
        <taxon>Euteleostomi</taxon>
        <taxon>Mammalia</taxon>
        <taxon>Eutheria</taxon>
        <taxon>Euarchontoglires</taxon>
        <taxon>Glires</taxon>
        <taxon>Rodentia</taxon>
        <taxon>Myomorpha</taxon>
        <taxon>Muroidea</taxon>
        <taxon>Muridae</taxon>
        <taxon>Murinae</taxon>
        <taxon>Mus</taxon>
        <taxon>Mus</taxon>
    </lineage>
</organism>